<organism evidence="6">
    <name type="scientific">Tityus obscurus</name>
    <name type="common">Amazonian scorpion</name>
    <name type="synonym">Tityus cambridgei</name>
    <dbReference type="NCBI Taxonomy" id="1221240"/>
    <lineage>
        <taxon>Eukaryota</taxon>
        <taxon>Metazoa</taxon>
        <taxon>Ecdysozoa</taxon>
        <taxon>Arthropoda</taxon>
        <taxon>Chelicerata</taxon>
        <taxon>Arachnida</taxon>
        <taxon>Scorpiones</taxon>
        <taxon>Buthida</taxon>
        <taxon>Buthoidea</taxon>
        <taxon>Buthidae</taxon>
        <taxon>Tityus</taxon>
    </lineage>
</organism>
<name>KA131_TITOB</name>
<protein>
    <recommendedName>
        <fullName>Potassium channel toxin alpha-KTx 13.1</fullName>
    </recommendedName>
    <alternativeName>
        <fullName>Toxin Tc1</fullName>
    </alternativeName>
    <alternativeName>
        <fullName>Toxin To1</fullName>
    </alternativeName>
</protein>
<dbReference type="PDB" id="1JLZ">
    <property type="method" value="NMR"/>
    <property type="chains" value="A=1-23"/>
</dbReference>
<dbReference type="PDBsum" id="1JLZ"/>
<dbReference type="SMR" id="P83243"/>
<dbReference type="EvolutionaryTrace" id="P83243"/>
<dbReference type="GO" id="GO:0005576">
    <property type="term" value="C:extracellular region"/>
    <property type="evidence" value="ECO:0007005"/>
    <property type="project" value="UniProtKB"/>
</dbReference>
<dbReference type="GO" id="GO:0019870">
    <property type="term" value="F:potassium channel inhibitor activity"/>
    <property type="evidence" value="ECO:0000314"/>
    <property type="project" value="UniProtKB"/>
</dbReference>
<dbReference type="GO" id="GO:0090729">
    <property type="term" value="F:toxin activity"/>
    <property type="evidence" value="ECO:0000314"/>
    <property type="project" value="UniProtKB"/>
</dbReference>
<dbReference type="GO" id="GO:0044562">
    <property type="term" value="P:envenomation resulting in negative regulation of voltage-gated potassium channel activity in another organism"/>
    <property type="evidence" value="ECO:0000314"/>
    <property type="project" value="UniProtKB"/>
</dbReference>
<dbReference type="InterPro" id="IPR036574">
    <property type="entry name" value="Scorpion_toxin-like_sf"/>
</dbReference>
<dbReference type="SUPFAM" id="SSF57095">
    <property type="entry name" value="Scorpion toxin-like"/>
    <property type="match status" value="1"/>
</dbReference>
<reference evidence="6" key="1">
    <citation type="journal article" date="2000" name="FEBS Lett.">
        <title>Tc1, from Tityus cambridgei, is the first member of a new subfamily of scorpion toxin that blocks K(+)-channels.</title>
        <authorList>
            <person name="Batista C.V.F."/>
            <person name="Gomez-Lagunas F."/>
            <person name="Lucas S."/>
            <person name="Possani L.D."/>
        </authorList>
    </citation>
    <scope>PROTEIN SEQUENCE</scope>
    <scope>FUNCTION</scope>
    <scope>MASS SPECTROMETRY</scope>
    <source>
        <tissue>Venom</tissue>
    </source>
</reference>
<reference key="2">
    <citation type="journal article" date="2004" name="J. Chromatogr. B">
        <title>Proteomics of the venom from the Amazonian scorpion Tityus cambridgei and the role of prolines on mass spectrometry analysis of toxins.</title>
        <authorList>
            <person name="Batista C.V.F."/>
            <person name="del Pozo L."/>
            <person name="Zamudio F.Z."/>
            <person name="Contreras S."/>
            <person name="Becerril B."/>
            <person name="Wanke E."/>
            <person name="Possani L.D."/>
        </authorList>
    </citation>
    <scope>PROTEIN SEQUENCE OF 1-10</scope>
    <scope>SUBCELLULAR LOCATION</scope>
    <scope>TISSUE SPECIFICITY</scope>
    <scope>MASS SPECTROMETRY</scope>
    <source>
        <tissue>Venom</tissue>
    </source>
</reference>
<reference key="3">
    <citation type="journal article" date="2002" name="Protein Sci.">
        <title>Solution structure of a K(+)-channel blocker from the scorpion Tityus cambridgei.</title>
        <authorList>
            <person name="Wang I."/>
            <person name="Wu S.H."/>
            <person name="Chang H.K."/>
            <person name="Shieh R.C."/>
            <person name="Yu H.M."/>
            <person name="Chen C."/>
        </authorList>
    </citation>
    <scope>STRUCTURE BY NMR</scope>
    <scope>DISULFIDE BONDS</scope>
</reference>
<keyword id="KW-0002">3D-structure</keyword>
<keyword id="KW-0903">Direct protein sequencing</keyword>
<keyword id="KW-1015">Disulfide bond</keyword>
<keyword id="KW-0872">Ion channel impairing toxin</keyword>
<keyword id="KW-0528">Neurotoxin</keyword>
<keyword id="KW-0632">Potassium channel impairing toxin</keyword>
<keyword id="KW-0964">Secreted</keyword>
<keyword id="KW-0800">Toxin</keyword>
<feature type="peptide" id="PRO_0000044919" description="Potassium channel toxin alpha-KTx 13.1">
    <location>
        <begin position="1"/>
        <end position="23"/>
    </location>
</feature>
<feature type="region of interest" description="Interaction with Ca(2+)-activated K(+) channels" evidence="2">
    <location>
        <begin position="13"/>
        <end position="20"/>
    </location>
</feature>
<feature type="site" description="Basic residue of the functional dyad" evidence="1">
    <location>
        <position position="14"/>
    </location>
</feature>
<feature type="site" description="Aromatic residue of the functional dyad" evidence="1">
    <location>
        <position position="23"/>
    </location>
</feature>
<feature type="disulfide bond" evidence="4">
    <location>
        <begin position="2"/>
        <end position="15"/>
    </location>
</feature>
<feature type="disulfide bond" evidence="4">
    <location>
        <begin position="5"/>
        <end position="20"/>
    </location>
</feature>
<feature type="disulfide bond" evidence="4">
    <location>
        <begin position="9"/>
        <end position="22"/>
    </location>
</feature>
<feature type="helix" evidence="7">
    <location>
        <begin position="5"/>
        <end position="8"/>
    </location>
</feature>
<feature type="strand" evidence="7">
    <location>
        <begin position="11"/>
        <end position="16"/>
    </location>
</feature>
<feature type="strand" evidence="7">
    <location>
        <begin position="19"/>
        <end position="22"/>
    </location>
</feature>
<sequence>ACGSCRKKCKGSGKCINGRCKCY</sequence>
<accession>P83243</accession>
<comment type="function">
    <text evidence="3">Blocks reversibly Shaker B potassium channels. Also displaces binding of noxiustoxin to mouse brain synaptosome membranes.</text>
</comment>
<comment type="subcellular location">
    <subcellularLocation>
        <location evidence="5 6">Secreted</location>
    </subcellularLocation>
</comment>
<comment type="tissue specificity">
    <text evidence="5 6">Expressed by the venom gland.</text>
</comment>
<comment type="domain">
    <text>Has the structural arrangement of an alpha-helix connected to a beta-sheet by disulfide bonds (CSalpha/beta).</text>
</comment>
<comment type="mass spectrometry"/>
<comment type="mass spectrometry"/>
<comment type="similarity">
    <text evidence="6">Belongs to the short scorpion toxin superfamily. Potassium channel inhibitor family. Alpha-KTx 13 subfamily.</text>
</comment>
<proteinExistence type="evidence at protein level"/>
<evidence type="ECO:0000250" key="1"/>
<evidence type="ECO:0000255" key="2"/>
<evidence type="ECO:0000269" key="3">
    <source>
    </source>
</evidence>
<evidence type="ECO:0000269" key="4">
    <source>
    </source>
</evidence>
<evidence type="ECO:0000269" key="5">
    <source>
    </source>
</evidence>
<evidence type="ECO:0000305" key="6"/>
<evidence type="ECO:0007829" key="7">
    <source>
        <dbReference type="PDB" id="1JLZ"/>
    </source>
</evidence>